<gene>
    <name evidence="1" type="primary">recA</name>
    <name type="ordered locus">Cag_0241</name>
</gene>
<sequence>MTMDNPKVEQAGHAVDSAKLKQLNLAVDALEKQFGKGTIMRMGDGSAGLTVQAISTGSMALDFALGVGGLPRGRVTEIYGPESSGKTTLALHVIAEAQKEGGITAIVDAEHAFDPSYARKLGVDINALLISQPESGEQALSIVETLVRSGAVDVVVVDSVAALVPQAELEGEMGDSSMGLQARLMSQALRKLTGAISKSSTVCIFINQLRDKIGVMYGSPETTTGGKALKFYSSVRLDIRKIAQLKDGDELTGSRTRVKVVKNKVAPPFKMAEFDILYGEGISALGELIDLGVEFGVIKKAGSWFSYGTEKLGQGRESVKKILREDPVLYQKIHMQVKELMTGHTEIISSPTE</sequence>
<organism>
    <name type="scientific">Chlorobium chlorochromatii (strain CaD3)</name>
    <dbReference type="NCBI Taxonomy" id="340177"/>
    <lineage>
        <taxon>Bacteria</taxon>
        <taxon>Pseudomonadati</taxon>
        <taxon>Chlorobiota</taxon>
        <taxon>Chlorobiia</taxon>
        <taxon>Chlorobiales</taxon>
        <taxon>Chlorobiaceae</taxon>
        <taxon>Chlorobium/Pelodictyon group</taxon>
        <taxon>Chlorobium</taxon>
    </lineage>
</organism>
<reference key="1">
    <citation type="submission" date="2005-08" db="EMBL/GenBank/DDBJ databases">
        <title>Complete sequence of Chlorobium chlorochromatii CaD3.</title>
        <authorList>
            <consortium name="US DOE Joint Genome Institute"/>
            <person name="Copeland A."/>
            <person name="Lucas S."/>
            <person name="Lapidus A."/>
            <person name="Barry K."/>
            <person name="Detter J.C."/>
            <person name="Glavina T."/>
            <person name="Hammon N."/>
            <person name="Israni S."/>
            <person name="Pitluck S."/>
            <person name="Bryant D."/>
            <person name="Schmutz J."/>
            <person name="Larimer F."/>
            <person name="Land M."/>
            <person name="Kyrpides N."/>
            <person name="Ivanova N."/>
            <person name="Richardson P."/>
        </authorList>
    </citation>
    <scope>NUCLEOTIDE SEQUENCE [LARGE SCALE GENOMIC DNA]</scope>
    <source>
        <strain>CaD3</strain>
    </source>
</reference>
<protein>
    <recommendedName>
        <fullName evidence="1">Protein RecA</fullName>
    </recommendedName>
    <alternativeName>
        <fullName evidence="1">Recombinase A</fullName>
    </alternativeName>
</protein>
<evidence type="ECO:0000255" key="1">
    <source>
        <dbReference type="HAMAP-Rule" id="MF_00268"/>
    </source>
</evidence>
<keyword id="KW-0067">ATP-binding</keyword>
<keyword id="KW-0963">Cytoplasm</keyword>
<keyword id="KW-0227">DNA damage</keyword>
<keyword id="KW-0233">DNA recombination</keyword>
<keyword id="KW-0234">DNA repair</keyword>
<keyword id="KW-0238">DNA-binding</keyword>
<keyword id="KW-0547">Nucleotide-binding</keyword>
<keyword id="KW-0742">SOS response</keyword>
<comment type="function">
    <text evidence="1">Can catalyze the hydrolysis of ATP in the presence of single-stranded DNA, the ATP-dependent uptake of single-stranded DNA by duplex DNA, and the ATP-dependent hybridization of homologous single-stranded DNAs. It interacts with LexA causing its activation and leading to its autocatalytic cleavage.</text>
</comment>
<comment type="subcellular location">
    <subcellularLocation>
        <location evidence="1">Cytoplasm</location>
    </subcellularLocation>
</comment>
<comment type="similarity">
    <text evidence="1">Belongs to the RecA family.</text>
</comment>
<accession>Q3AU08</accession>
<feature type="chain" id="PRO_1000114319" description="Protein RecA">
    <location>
        <begin position="1"/>
        <end position="353"/>
    </location>
</feature>
<feature type="binding site" evidence="1">
    <location>
        <begin position="80"/>
        <end position="87"/>
    </location>
    <ligand>
        <name>ATP</name>
        <dbReference type="ChEBI" id="CHEBI:30616"/>
    </ligand>
</feature>
<proteinExistence type="inferred from homology"/>
<name>RECA_CHLCH</name>
<dbReference type="EMBL" id="CP000108">
    <property type="protein sequence ID" value="ABB27517.1"/>
    <property type="molecule type" value="Genomic_DNA"/>
</dbReference>
<dbReference type="SMR" id="Q3AU08"/>
<dbReference type="STRING" id="340177.Cag_0241"/>
<dbReference type="KEGG" id="cch:Cag_0241"/>
<dbReference type="eggNOG" id="COG0468">
    <property type="taxonomic scope" value="Bacteria"/>
</dbReference>
<dbReference type="HOGENOM" id="CLU_040469_3_2_10"/>
<dbReference type="GO" id="GO:0005829">
    <property type="term" value="C:cytosol"/>
    <property type="evidence" value="ECO:0007669"/>
    <property type="project" value="TreeGrafter"/>
</dbReference>
<dbReference type="GO" id="GO:0005524">
    <property type="term" value="F:ATP binding"/>
    <property type="evidence" value="ECO:0007669"/>
    <property type="project" value="UniProtKB-UniRule"/>
</dbReference>
<dbReference type="GO" id="GO:0016887">
    <property type="term" value="F:ATP hydrolysis activity"/>
    <property type="evidence" value="ECO:0007669"/>
    <property type="project" value="InterPro"/>
</dbReference>
<dbReference type="GO" id="GO:0140664">
    <property type="term" value="F:ATP-dependent DNA damage sensor activity"/>
    <property type="evidence" value="ECO:0007669"/>
    <property type="project" value="InterPro"/>
</dbReference>
<dbReference type="GO" id="GO:0003684">
    <property type="term" value="F:damaged DNA binding"/>
    <property type="evidence" value="ECO:0007669"/>
    <property type="project" value="UniProtKB-UniRule"/>
</dbReference>
<dbReference type="GO" id="GO:0003697">
    <property type="term" value="F:single-stranded DNA binding"/>
    <property type="evidence" value="ECO:0007669"/>
    <property type="project" value="UniProtKB-UniRule"/>
</dbReference>
<dbReference type="GO" id="GO:0006310">
    <property type="term" value="P:DNA recombination"/>
    <property type="evidence" value="ECO:0007669"/>
    <property type="project" value="UniProtKB-UniRule"/>
</dbReference>
<dbReference type="GO" id="GO:0006281">
    <property type="term" value="P:DNA repair"/>
    <property type="evidence" value="ECO:0007669"/>
    <property type="project" value="UniProtKB-UniRule"/>
</dbReference>
<dbReference type="GO" id="GO:0009432">
    <property type="term" value="P:SOS response"/>
    <property type="evidence" value="ECO:0007669"/>
    <property type="project" value="UniProtKB-UniRule"/>
</dbReference>
<dbReference type="CDD" id="cd00983">
    <property type="entry name" value="RecA"/>
    <property type="match status" value="1"/>
</dbReference>
<dbReference type="FunFam" id="3.40.50.300:FF:000087">
    <property type="entry name" value="Recombinase RecA"/>
    <property type="match status" value="1"/>
</dbReference>
<dbReference type="Gene3D" id="3.40.50.300">
    <property type="entry name" value="P-loop containing nucleotide triphosphate hydrolases"/>
    <property type="match status" value="1"/>
</dbReference>
<dbReference type="HAMAP" id="MF_00268">
    <property type="entry name" value="RecA"/>
    <property type="match status" value="1"/>
</dbReference>
<dbReference type="InterPro" id="IPR003593">
    <property type="entry name" value="AAA+_ATPase"/>
</dbReference>
<dbReference type="InterPro" id="IPR013765">
    <property type="entry name" value="DNA_recomb/repair_RecA"/>
</dbReference>
<dbReference type="InterPro" id="IPR020584">
    <property type="entry name" value="DNA_recomb/repair_RecA_CS"/>
</dbReference>
<dbReference type="InterPro" id="IPR027417">
    <property type="entry name" value="P-loop_NTPase"/>
</dbReference>
<dbReference type="InterPro" id="IPR049261">
    <property type="entry name" value="RecA-like_C"/>
</dbReference>
<dbReference type="InterPro" id="IPR049428">
    <property type="entry name" value="RecA-like_N"/>
</dbReference>
<dbReference type="InterPro" id="IPR020588">
    <property type="entry name" value="RecA_ATP-bd"/>
</dbReference>
<dbReference type="InterPro" id="IPR023400">
    <property type="entry name" value="RecA_C_sf"/>
</dbReference>
<dbReference type="InterPro" id="IPR020587">
    <property type="entry name" value="RecA_monomer-monomer_interface"/>
</dbReference>
<dbReference type="NCBIfam" id="TIGR02012">
    <property type="entry name" value="tigrfam_recA"/>
    <property type="match status" value="1"/>
</dbReference>
<dbReference type="PANTHER" id="PTHR45900:SF1">
    <property type="entry name" value="MITOCHONDRIAL DNA REPAIR PROTEIN RECA HOMOLOG-RELATED"/>
    <property type="match status" value="1"/>
</dbReference>
<dbReference type="PANTHER" id="PTHR45900">
    <property type="entry name" value="RECA"/>
    <property type="match status" value="1"/>
</dbReference>
<dbReference type="Pfam" id="PF00154">
    <property type="entry name" value="RecA"/>
    <property type="match status" value="1"/>
</dbReference>
<dbReference type="Pfam" id="PF21096">
    <property type="entry name" value="RecA_C"/>
    <property type="match status" value="1"/>
</dbReference>
<dbReference type="PRINTS" id="PR00142">
    <property type="entry name" value="RECA"/>
</dbReference>
<dbReference type="SMART" id="SM00382">
    <property type="entry name" value="AAA"/>
    <property type="match status" value="1"/>
</dbReference>
<dbReference type="SUPFAM" id="SSF52540">
    <property type="entry name" value="P-loop containing nucleoside triphosphate hydrolases"/>
    <property type="match status" value="1"/>
</dbReference>
<dbReference type="SUPFAM" id="SSF54752">
    <property type="entry name" value="RecA protein, C-terminal domain"/>
    <property type="match status" value="1"/>
</dbReference>
<dbReference type="PROSITE" id="PS00321">
    <property type="entry name" value="RECA_1"/>
    <property type="match status" value="1"/>
</dbReference>
<dbReference type="PROSITE" id="PS50162">
    <property type="entry name" value="RECA_2"/>
    <property type="match status" value="1"/>
</dbReference>
<dbReference type="PROSITE" id="PS50163">
    <property type="entry name" value="RECA_3"/>
    <property type="match status" value="1"/>
</dbReference>